<gene>
    <name evidence="1" type="primary">rlmH</name>
    <name type="ordered locus">DVU_1254</name>
</gene>
<evidence type="ECO:0000255" key="1">
    <source>
        <dbReference type="HAMAP-Rule" id="MF_00658"/>
    </source>
</evidence>
<keyword id="KW-0963">Cytoplasm</keyword>
<keyword id="KW-0489">Methyltransferase</keyword>
<keyword id="KW-1185">Reference proteome</keyword>
<keyword id="KW-0698">rRNA processing</keyword>
<keyword id="KW-0949">S-adenosyl-L-methionine</keyword>
<keyword id="KW-0808">Transferase</keyword>
<reference key="1">
    <citation type="journal article" date="2004" name="Nat. Biotechnol.">
        <title>The genome sequence of the anaerobic, sulfate-reducing bacterium Desulfovibrio vulgaris Hildenborough.</title>
        <authorList>
            <person name="Heidelberg J.F."/>
            <person name="Seshadri R."/>
            <person name="Haveman S.A."/>
            <person name="Hemme C.L."/>
            <person name="Paulsen I.T."/>
            <person name="Kolonay J.F."/>
            <person name="Eisen J.A."/>
            <person name="Ward N.L."/>
            <person name="Methe B.A."/>
            <person name="Brinkac L.M."/>
            <person name="Daugherty S.C."/>
            <person name="DeBoy R.T."/>
            <person name="Dodson R.J."/>
            <person name="Durkin A.S."/>
            <person name="Madupu R."/>
            <person name="Nelson W.C."/>
            <person name="Sullivan S.A."/>
            <person name="Fouts D.E."/>
            <person name="Haft D.H."/>
            <person name="Selengut J."/>
            <person name="Peterson J.D."/>
            <person name="Davidsen T.M."/>
            <person name="Zafar N."/>
            <person name="Zhou L."/>
            <person name="Radune D."/>
            <person name="Dimitrov G."/>
            <person name="Hance M."/>
            <person name="Tran K."/>
            <person name="Khouri H.M."/>
            <person name="Gill J."/>
            <person name="Utterback T.R."/>
            <person name="Feldblyum T.V."/>
            <person name="Wall J.D."/>
            <person name="Voordouw G."/>
            <person name="Fraser C.M."/>
        </authorList>
    </citation>
    <scope>NUCLEOTIDE SEQUENCE [LARGE SCALE GENOMIC DNA]</scope>
    <source>
        <strain>ATCC 29579 / DSM 644 / CCUG 34227 / NCIMB 8303 / VKM B-1760 / Hildenborough</strain>
    </source>
</reference>
<protein>
    <recommendedName>
        <fullName evidence="1">Ribosomal RNA large subunit methyltransferase H</fullName>
        <ecNumber evidence="1">2.1.1.177</ecNumber>
    </recommendedName>
    <alternativeName>
        <fullName evidence="1">23S rRNA (pseudouridine1915-N3)-methyltransferase</fullName>
    </alternativeName>
    <alternativeName>
        <fullName evidence="1">23S rRNA m3Psi1915 methyltransferase</fullName>
    </alternativeName>
    <alternativeName>
        <fullName evidence="1">rRNA (pseudouridine-N3-)-methyltransferase RlmH</fullName>
    </alternativeName>
</protein>
<feature type="chain" id="PRO_0000198114" description="Ribosomal RNA large subunit methyltransferase H">
    <location>
        <begin position="1"/>
        <end position="156"/>
    </location>
</feature>
<feature type="binding site" evidence="1">
    <location>
        <position position="72"/>
    </location>
    <ligand>
        <name>S-adenosyl-L-methionine</name>
        <dbReference type="ChEBI" id="CHEBI:59789"/>
    </ligand>
</feature>
<feature type="binding site" evidence="1">
    <location>
        <position position="104"/>
    </location>
    <ligand>
        <name>S-adenosyl-L-methionine</name>
        <dbReference type="ChEBI" id="CHEBI:59789"/>
    </ligand>
</feature>
<feature type="binding site" evidence="1">
    <location>
        <begin position="123"/>
        <end position="128"/>
    </location>
    <ligand>
        <name>S-adenosyl-L-methionine</name>
        <dbReference type="ChEBI" id="CHEBI:59789"/>
    </ligand>
</feature>
<proteinExistence type="inferred from homology"/>
<name>RLMH_NITV2</name>
<accession>Q72CM9</accession>
<sequence length="156" mass="17419">MRTLRILAVGRIRTPFWQQAATHYMERIRHNCRLTETVVKDGGAALPPTARNADEGARLIAAMGPTDIVVCLDEHGRNMTSRDFAGFIERLTENATRTPCFVIGGAFGLDKSVLQRAEHKLALGPMTFPHEMARVVLLEQLYRADAILRGAPYHHD</sequence>
<dbReference type="EC" id="2.1.1.177" evidence="1"/>
<dbReference type="EMBL" id="AE017285">
    <property type="protein sequence ID" value="AAS95732.1"/>
    <property type="molecule type" value="Genomic_DNA"/>
</dbReference>
<dbReference type="RefSeq" id="WP_010938550.1">
    <property type="nucleotide sequence ID" value="NC_002937.3"/>
</dbReference>
<dbReference type="RefSeq" id="YP_010473.1">
    <property type="nucleotide sequence ID" value="NC_002937.3"/>
</dbReference>
<dbReference type="SMR" id="Q72CM9"/>
<dbReference type="STRING" id="882.DVU_1254"/>
<dbReference type="PaxDb" id="882-DVU_1254"/>
<dbReference type="EnsemblBacteria" id="AAS95732">
    <property type="protein sequence ID" value="AAS95732"/>
    <property type="gene ID" value="DVU_1254"/>
</dbReference>
<dbReference type="KEGG" id="dvu:DVU_1254"/>
<dbReference type="PATRIC" id="fig|882.5.peg.1172"/>
<dbReference type="eggNOG" id="COG1576">
    <property type="taxonomic scope" value="Bacteria"/>
</dbReference>
<dbReference type="HOGENOM" id="CLU_100552_1_0_7"/>
<dbReference type="OrthoDB" id="9806643at2"/>
<dbReference type="PhylomeDB" id="Q72CM9"/>
<dbReference type="Proteomes" id="UP000002194">
    <property type="component" value="Chromosome"/>
</dbReference>
<dbReference type="GO" id="GO:0005737">
    <property type="term" value="C:cytoplasm"/>
    <property type="evidence" value="ECO:0007669"/>
    <property type="project" value="UniProtKB-SubCell"/>
</dbReference>
<dbReference type="GO" id="GO:0070038">
    <property type="term" value="F:rRNA (pseudouridine-N3-)-methyltransferase activity"/>
    <property type="evidence" value="ECO:0007669"/>
    <property type="project" value="UniProtKB-UniRule"/>
</dbReference>
<dbReference type="CDD" id="cd18081">
    <property type="entry name" value="RlmH-like"/>
    <property type="match status" value="1"/>
</dbReference>
<dbReference type="Gene3D" id="3.40.1280.10">
    <property type="match status" value="1"/>
</dbReference>
<dbReference type="HAMAP" id="MF_00658">
    <property type="entry name" value="23SrRNA_methyltr_H"/>
    <property type="match status" value="1"/>
</dbReference>
<dbReference type="InterPro" id="IPR029028">
    <property type="entry name" value="Alpha/beta_knot_MTases"/>
</dbReference>
<dbReference type="InterPro" id="IPR003742">
    <property type="entry name" value="RlmH-like"/>
</dbReference>
<dbReference type="InterPro" id="IPR029026">
    <property type="entry name" value="tRNA_m1G_MTases_N"/>
</dbReference>
<dbReference type="PANTHER" id="PTHR33603">
    <property type="entry name" value="METHYLTRANSFERASE"/>
    <property type="match status" value="1"/>
</dbReference>
<dbReference type="PANTHER" id="PTHR33603:SF1">
    <property type="entry name" value="RIBOSOMAL RNA LARGE SUBUNIT METHYLTRANSFERASE H"/>
    <property type="match status" value="1"/>
</dbReference>
<dbReference type="Pfam" id="PF02590">
    <property type="entry name" value="SPOUT_MTase"/>
    <property type="match status" value="1"/>
</dbReference>
<dbReference type="PIRSF" id="PIRSF004505">
    <property type="entry name" value="MT_bac"/>
    <property type="match status" value="1"/>
</dbReference>
<dbReference type="SUPFAM" id="SSF75217">
    <property type="entry name" value="alpha/beta knot"/>
    <property type="match status" value="1"/>
</dbReference>
<comment type="function">
    <text evidence="1">Specifically methylates the pseudouridine at position 1915 (m3Psi1915) in 23S rRNA.</text>
</comment>
<comment type="catalytic activity">
    <reaction evidence="1">
        <text>pseudouridine(1915) in 23S rRNA + S-adenosyl-L-methionine = N(3)-methylpseudouridine(1915) in 23S rRNA + S-adenosyl-L-homocysteine + H(+)</text>
        <dbReference type="Rhea" id="RHEA:42752"/>
        <dbReference type="Rhea" id="RHEA-COMP:10221"/>
        <dbReference type="Rhea" id="RHEA-COMP:10222"/>
        <dbReference type="ChEBI" id="CHEBI:15378"/>
        <dbReference type="ChEBI" id="CHEBI:57856"/>
        <dbReference type="ChEBI" id="CHEBI:59789"/>
        <dbReference type="ChEBI" id="CHEBI:65314"/>
        <dbReference type="ChEBI" id="CHEBI:74486"/>
        <dbReference type="EC" id="2.1.1.177"/>
    </reaction>
</comment>
<comment type="subunit">
    <text evidence="1">Homodimer.</text>
</comment>
<comment type="subcellular location">
    <subcellularLocation>
        <location evidence="1">Cytoplasm</location>
    </subcellularLocation>
</comment>
<comment type="similarity">
    <text evidence="1">Belongs to the RNA methyltransferase RlmH family.</text>
</comment>
<organism>
    <name type="scientific">Nitratidesulfovibrio vulgaris (strain ATCC 29579 / DSM 644 / CCUG 34227 / NCIMB 8303 / VKM B-1760 / Hildenborough)</name>
    <name type="common">Desulfovibrio vulgaris</name>
    <dbReference type="NCBI Taxonomy" id="882"/>
    <lineage>
        <taxon>Bacteria</taxon>
        <taxon>Pseudomonadati</taxon>
        <taxon>Thermodesulfobacteriota</taxon>
        <taxon>Desulfovibrionia</taxon>
        <taxon>Desulfovibrionales</taxon>
        <taxon>Desulfovibrionaceae</taxon>
        <taxon>Nitratidesulfovibrio</taxon>
    </lineage>
</organism>